<comment type="function">
    <text evidence="1">Produces ATP from ADP in the presence of a proton gradient across the membrane.</text>
</comment>
<comment type="subunit">
    <text>F-type ATPases have 2 components, CF(1) - the catalytic core - and CF(0) - the membrane proton channel. CF(1) has five subunits: alpha(3), beta(3), gamma(1), delta(1), epsilon(1). CF(0) has three main subunits: a, b and c.</text>
</comment>
<comment type="subcellular location">
    <subcellularLocation>
        <location evidence="1">Cell membrane</location>
        <topology evidence="1">Peripheral membrane protein</topology>
    </subcellularLocation>
</comment>
<comment type="similarity">
    <text evidence="1">Belongs to the ATPase epsilon chain family.</text>
</comment>
<proteinExistence type="inferred from homology"/>
<sequence>MADKIKLEVVTPERVVANEHVDFVVAPGVEGEIGILPFHAPLITSLDIGILRYTVEGKTEKIALSGGFLEVKGNKVVVLANAAERGEEIDVERAQRALERARERLARRTPDIDVLRAELAMRRALNRLKAAGKM</sequence>
<protein>
    <recommendedName>
        <fullName evidence="1">ATP synthase epsilon chain</fullName>
    </recommendedName>
    <alternativeName>
        <fullName evidence="1">ATP synthase F1 sector epsilon subunit</fullName>
    </alternativeName>
    <alternativeName>
        <fullName evidence="1">F-ATPase epsilon subunit</fullName>
    </alternativeName>
</protein>
<dbReference type="EMBL" id="CP000141">
    <property type="protein sequence ID" value="ABB15344.1"/>
    <property type="molecule type" value="Genomic_DNA"/>
</dbReference>
<dbReference type="RefSeq" id="WP_011345410.1">
    <property type="nucleotide sequence ID" value="NC_007503.1"/>
</dbReference>
<dbReference type="SMR" id="Q3A947"/>
<dbReference type="FunCoup" id="Q3A947">
    <property type="interactions" value="394"/>
</dbReference>
<dbReference type="STRING" id="246194.CHY_2544"/>
<dbReference type="KEGG" id="chy:CHY_2544"/>
<dbReference type="eggNOG" id="COG0355">
    <property type="taxonomic scope" value="Bacteria"/>
</dbReference>
<dbReference type="HOGENOM" id="CLU_084338_1_1_9"/>
<dbReference type="InParanoid" id="Q3A947"/>
<dbReference type="OrthoDB" id="9804110at2"/>
<dbReference type="Proteomes" id="UP000002706">
    <property type="component" value="Chromosome"/>
</dbReference>
<dbReference type="GO" id="GO:0005886">
    <property type="term" value="C:plasma membrane"/>
    <property type="evidence" value="ECO:0007669"/>
    <property type="project" value="UniProtKB-SubCell"/>
</dbReference>
<dbReference type="GO" id="GO:0045259">
    <property type="term" value="C:proton-transporting ATP synthase complex"/>
    <property type="evidence" value="ECO:0007669"/>
    <property type="project" value="UniProtKB-KW"/>
</dbReference>
<dbReference type="GO" id="GO:0005524">
    <property type="term" value="F:ATP binding"/>
    <property type="evidence" value="ECO:0007669"/>
    <property type="project" value="UniProtKB-UniRule"/>
</dbReference>
<dbReference type="GO" id="GO:0046933">
    <property type="term" value="F:proton-transporting ATP synthase activity, rotational mechanism"/>
    <property type="evidence" value="ECO:0007669"/>
    <property type="project" value="UniProtKB-UniRule"/>
</dbReference>
<dbReference type="CDD" id="cd12152">
    <property type="entry name" value="F1-ATPase_delta"/>
    <property type="match status" value="1"/>
</dbReference>
<dbReference type="Gene3D" id="1.20.5.440">
    <property type="entry name" value="ATP synthase delta/epsilon subunit, C-terminal domain"/>
    <property type="match status" value="1"/>
</dbReference>
<dbReference type="Gene3D" id="2.60.15.10">
    <property type="entry name" value="F0F1 ATP synthase delta/epsilon subunit, N-terminal"/>
    <property type="match status" value="1"/>
</dbReference>
<dbReference type="HAMAP" id="MF_00530">
    <property type="entry name" value="ATP_synth_epsil_bac"/>
    <property type="match status" value="1"/>
</dbReference>
<dbReference type="InterPro" id="IPR036794">
    <property type="entry name" value="ATP_F1_dsu/esu_C_sf"/>
</dbReference>
<dbReference type="InterPro" id="IPR001469">
    <property type="entry name" value="ATP_synth_F1_dsu/esu"/>
</dbReference>
<dbReference type="InterPro" id="IPR020546">
    <property type="entry name" value="ATP_synth_F1_dsu/esu_N"/>
</dbReference>
<dbReference type="InterPro" id="IPR020547">
    <property type="entry name" value="ATP_synth_F1_esu_C"/>
</dbReference>
<dbReference type="InterPro" id="IPR036771">
    <property type="entry name" value="ATPsynth_dsu/esu_N"/>
</dbReference>
<dbReference type="NCBIfam" id="TIGR01216">
    <property type="entry name" value="ATP_synt_epsi"/>
    <property type="match status" value="1"/>
</dbReference>
<dbReference type="NCBIfam" id="NF001846">
    <property type="entry name" value="PRK00571.1-3"/>
    <property type="match status" value="1"/>
</dbReference>
<dbReference type="NCBIfam" id="NF009980">
    <property type="entry name" value="PRK13446.1"/>
    <property type="match status" value="1"/>
</dbReference>
<dbReference type="PANTHER" id="PTHR13822">
    <property type="entry name" value="ATP SYNTHASE DELTA/EPSILON CHAIN"/>
    <property type="match status" value="1"/>
</dbReference>
<dbReference type="PANTHER" id="PTHR13822:SF10">
    <property type="entry name" value="ATP SYNTHASE EPSILON CHAIN, CHLOROPLASTIC"/>
    <property type="match status" value="1"/>
</dbReference>
<dbReference type="Pfam" id="PF00401">
    <property type="entry name" value="ATP-synt_DE"/>
    <property type="match status" value="1"/>
</dbReference>
<dbReference type="Pfam" id="PF02823">
    <property type="entry name" value="ATP-synt_DE_N"/>
    <property type="match status" value="1"/>
</dbReference>
<dbReference type="SUPFAM" id="SSF46604">
    <property type="entry name" value="Epsilon subunit of F1F0-ATP synthase C-terminal domain"/>
    <property type="match status" value="1"/>
</dbReference>
<dbReference type="SUPFAM" id="SSF51344">
    <property type="entry name" value="Epsilon subunit of F1F0-ATP synthase N-terminal domain"/>
    <property type="match status" value="1"/>
</dbReference>
<organism>
    <name type="scientific">Carboxydothermus hydrogenoformans (strain ATCC BAA-161 / DSM 6008 / Z-2901)</name>
    <dbReference type="NCBI Taxonomy" id="246194"/>
    <lineage>
        <taxon>Bacteria</taxon>
        <taxon>Bacillati</taxon>
        <taxon>Bacillota</taxon>
        <taxon>Clostridia</taxon>
        <taxon>Thermoanaerobacterales</taxon>
        <taxon>Thermoanaerobacteraceae</taxon>
        <taxon>Carboxydothermus</taxon>
    </lineage>
</organism>
<reference key="1">
    <citation type="journal article" date="2005" name="PLoS Genet.">
        <title>Life in hot carbon monoxide: the complete genome sequence of Carboxydothermus hydrogenoformans Z-2901.</title>
        <authorList>
            <person name="Wu M."/>
            <person name="Ren Q."/>
            <person name="Durkin A.S."/>
            <person name="Daugherty S.C."/>
            <person name="Brinkac L.M."/>
            <person name="Dodson R.J."/>
            <person name="Madupu R."/>
            <person name="Sullivan S.A."/>
            <person name="Kolonay J.F."/>
            <person name="Nelson W.C."/>
            <person name="Tallon L.J."/>
            <person name="Jones K.M."/>
            <person name="Ulrich L.E."/>
            <person name="Gonzalez J.M."/>
            <person name="Zhulin I.B."/>
            <person name="Robb F.T."/>
            <person name="Eisen J.A."/>
        </authorList>
    </citation>
    <scope>NUCLEOTIDE SEQUENCE [LARGE SCALE GENOMIC DNA]</scope>
    <source>
        <strain>ATCC BAA-161 / DSM 6008 / Z-2901</strain>
    </source>
</reference>
<accession>Q3A947</accession>
<evidence type="ECO:0000255" key="1">
    <source>
        <dbReference type="HAMAP-Rule" id="MF_00530"/>
    </source>
</evidence>
<keyword id="KW-0066">ATP synthesis</keyword>
<keyword id="KW-1003">Cell membrane</keyword>
<keyword id="KW-0139">CF(1)</keyword>
<keyword id="KW-0375">Hydrogen ion transport</keyword>
<keyword id="KW-0406">Ion transport</keyword>
<keyword id="KW-0472">Membrane</keyword>
<keyword id="KW-1185">Reference proteome</keyword>
<keyword id="KW-0813">Transport</keyword>
<feature type="chain" id="PRO_0000265799" description="ATP synthase epsilon chain">
    <location>
        <begin position="1"/>
        <end position="134"/>
    </location>
</feature>
<gene>
    <name evidence="1" type="primary">atpC</name>
    <name type="ordered locus">CHY_2544</name>
</gene>
<name>ATPE_CARHZ</name>